<reference evidence="13 15" key="1">
    <citation type="journal article" date="2002" name="Peptides">
        <title>Characterization of a functional neuropeptide F receptor from Drosophila melanogaster.</title>
        <authorList>
            <person name="Garczynski S.F."/>
            <person name="Brown M.R."/>
            <person name="Shen P."/>
            <person name="Murray T.F."/>
            <person name="Crim J.W."/>
        </authorList>
    </citation>
    <scope>NUCLEOTIDE SEQUENCE [MRNA] (ISOFORM 6)</scope>
    <scope>FUNCTION</scope>
    <scope>TISSUE SPECIFICITY</scope>
    <scope>DISRUPTION PHENOTYPE</scope>
    <source>
        <tissue evidence="4">Larva</tissue>
    </source>
</reference>
<reference evidence="13 17" key="2">
    <citation type="submission" date="2006-06" db="EMBL/GenBank/DDBJ databases">
        <title>Molecular cloning of splice variant 1 of DmNPFR1.</title>
        <authorList>
            <person name="Joergensen L.M."/>
            <person name="Grimmelikhuijzen C.J.P."/>
        </authorList>
    </citation>
    <scope>NUCLEOTIDE SEQUENCE [MRNA] (ISOFORMS 2; A; B; C AND D)</scope>
</reference>
<reference evidence="14" key="3">
    <citation type="journal article" date="2000" name="Science">
        <title>The genome sequence of Drosophila melanogaster.</title>
        <authorList>
            <person name="Adams M.D."/>
            <person name="Celniker S.E."/>
            <person name="Holt R.A."/>
            <person name="Evans C.A."/>
            <person name="Gocayne J.D."/>
            <person name="Amanatides P.G."/>
            <person name="Scherer S.E."/>
            <person name="Li P.W."/>
            <person name="Hoskins R.A."/>
            <person name="Galle R.F."/>
            <person name="George R.A."/>
            <person name="Lewis S.E."/>
            <person name="Richards S."/>
            <person name="Ashburner M."/>
            <person name="Henderson S.N."/>
            <person name="Sutton G.G."/>
            <person name="Wortman J.R."/>
            <person name="Yandell M.D."/>
            <person name="Zhang Q."/>
            <person name="Chen L.X."/>
            <person name="Brandon R.C."/>
            <person name="Rogers Y.-H.C."/>
            <person name="Blazej R.G."/>
            <person name="Champe M."/>
            <person name="Pfeiffer B.D."/>
            <person name="Wan K.H."/>
            <person name="Doyle C."/>
            <person name="Baxter E.G."/>
            <person name="Helt G."/>
            <person name="Nelson C.R."/>
            <person name="Miklos G.L.G."/>
            <person name="Abril J.F."/>
            <person name="Agbayani A."/>
            <person name="An H.-J."/>
            <person name="Andrews-Pfannkoch C."/>
            <person name="Baldwin D."/>
            <person name="Ballew R.M."/>
            <person name="Basu A."/>
            <person name="Baxendale J."/>
            <person name="Bayraktaroglu L."/>
            <person name="Beasley E.M."/>
            <person name="Beeson K.Y."/>
            <person name="Benos P.V."/>
            <person name="Berman B.P."/>
            <person name="Bhandari D."/>
            <person name="Bolshakov S."/>
            <person name="Borkova D."/>
            <person name="Botchan M.R."/>
            <person name="Bouck J."/>
            <person name="Brokstein P."/>
            <person name="Brottier P."/>
            <person name="Burtis K.C."/>
            <person name="Busam D.A."/>
            <person name="Butler H."/>
            <person name="Cadieu E."/>
            <person name="Center A."/>
            <person name="Chandra I."/>
            <person name="Cherry J.M."/>
            <person name="Cawley S."/>
            <person name="Dahlke C."/>
            <person name="Davenport L.B."/>
            <person name="Davies P."/>
            <person name="de Pablos B."/>
            <person name="Delcher A."/>
            <person name="Deng Z."/>
            <person name="Mays A.D."/>
            <person name="Dew I."/>
            <person name="Dietz S.M."/>
            <person name="Dodson K."/>
            <person name="Doup L.E."/>
            <person name="Downes M."/>
            <person name="Dugan-Rocha S."/>
            <person name="Dunkov B.C."/>
            <person name="Dunn P."/>
            <person name="Durbin K.J."/>
            <person name="Evangelista C.C."/>
            <person name="Ferraz C."/>
            <person name="Ferriera S."/>
            <person name="Fleischmann W."/>
            <person name="Fosler C."/>
            <person name="Gabrielian A.E."/>
            <person name="Garg N.S."/>
            <person name="Gelbart W.M."/>
            <person name="Glasser K."/>
            <person name="Glodek A."/>
            <person name="Gong F."/>
            <person name="Gorrell J.H."/>
            <person name="Gu Z."/>
            <person name="Guan P."/>
            <person name="Harris M."/>
            <person name="Harris N.L."/>
            <person name="Harvey D.A."/>
            <person name="Heiman T.J."/>
            <person name="Hernandez J.R."/>
            <person name="Houck J."/>
            <person name="Hostin D."/>
            <person name="Houston K.A."/>
            <person name="Howland T.J."/>
            <person name="Wei M.-H."/>
            <person name="Ibegwam C."/>
            <person name="Jalali M."/>
            <person name="Kalush F."/>
            <person name="Karpen G.H."/>
            <person name="Ke Z."/>
            <person name="Kennison J.A."/>
            <person name="Ketchum K.A."/>
            <person name="Kimmel B.E."/>
            <person name="Kodira C.D."/>
            <person name="Kraft C.L."/>
            <person name="Kravitz S."/>
            <person name="Kulp D."/>
            <person name="Lai Z."/>
            <person name="Lasko P."/>
            <person name="Lei Y."/>
            <person name="Levitsky A.A."/>
            <person name="Li J.H."/>
            <person name="Li Z."/>
            <person name="Liang Y."/>
            <person name="Lin X."/>
            <person name="Liu X."/>
            <person name="Mattei B."/>
            <person name="McIntosh T.C."/>
            <person name="McLeod M.P."/>
            <person name="McPherson D."/>
            <person name="Merkulov G."/>
            <person name="Milshina N.V."/>
            <person name="Mobarry C."/>
            <person name="Morris J."/>
            <person name="Moshrefi A."/>
            <person name="Mount S.M."/>
            <person name="Moy M."/>
            <person name="Murphy B."/>
            <person name="Murphy L."/>
            <person name="Muzny D.M."/>
            <person name="Nelson D.L."/>
            <person name="Nelson D.R."/>
            <person name="Nelson K.A."/>
            <person name="Nixon K."/>
            <person name="Nusskern D.R."/>
            <person name="Pacleb J.M."/>
            <person name="Palazzolo M."/>
            <person name="Pittman G.S."/>
            <person name="Pan S."/>
            <person name="Pollard J."/>
            <person name="Puri V."/>
            <person name="Reese M.G."/>
            <person name="Reinert K."/>
            <person name="Remington K."/>
            <person name="Saunders R.D.C."/>
            <person name="Scheeler F."/>
            <person name="Shen H."/>
            <person name="Shue B.C."/>
            <person name="Siden-Kiamos I."/>
            <person name="Simpson M."/>
            <person name="Skupski M.P."/>
            <person name="Smith T.J."/>
            <person name="Spier E."/>
            <person name="Spradling A.C."/>
            <person name="Stapleton M."/>
            <person name="Strong R."/>
            <person name="Sun E."/>
            <person name="Svirskas R."/>
            <person name="Tector C."/>
            <person name="Turner R."/>
            <person name="Venter E."/>
            <person name="Wang A.H."/>
            <person name="Wang X."/>
            <person name="Wang Z.-Y."/>
            <person name="Wassarman D.A."/>
            <person name="Weinstock G.M."/>
            <person name="Weissenbach J."/>
            <person name="Williams S.M."/>
            <person name="Woodage T."/>
            <person name="Worley K.C."/>
            <person name="Wu D."/>
            <person name="Yang S."/>
            <person name="Yao Q.A."/>
            <person name="Ye J."/>
            <person name="Yeh R.-F."/>
            <person name="Zaveri J.S."/>
            <person name="Zhan M."/>
            <person name="Zhang G."/>
            <person name="Zhao Q."/>
            <person name="Zheng L."/>
            <person name="Zheng X.H."/>
            <person name="Zhong F.N."/>
            <person name="Zhong W."/>
            <person name="Zhou X."/>
            <person name="Zhu S.C."/>
            <person name="Zhu X."/>
            <person name="Smith H.O."/>
            <person name="Gibbs R.A."/>
            <person name="Myers E.W."/>
            <person name="Rubin G.M."/>
            <person name="Venter J.C."/>
        </authorList>
    </citation>
    <scope>NUCLEOTIDE SEQUENCE [LARGE SCALE GENOMIC DNA]</scope>
    <source>
        <strain>Berkeley</strain>
    </source>
</reference>
<reference evidence="13 14" key="4">
    <citation type="journal article" date="2002" name="Genome Biol.">
        <title>Annotation of the Drosophila melanogaster euchromatic genome: a systematic review.</title>
        <authorList>
            <person name="Misra S."/>
            <person name="Crosby M.A."/>
            <person name="Mungall C.J."/>
            <person name="Matthews B.B."/>
            <person name="Campbell K.S."/>
            <person name="Hradecky P."/>
            <person name="Huang Y."/>
            <person name="Kaminker J.S."/>
            <person name="Millburn G.H."/>
            <person name="Prochnik S.E."/>
            <person name="Smith C.D."/>
            <person name="Tupy J.L."/>
            <person name="Whitfield E.J."/>
            <person name="Bayraktaroglu L."/>
            <person name="Berman B.P."/>
            <person name="Bettencourt B.R."/>
            <person name="Celniker S.E."/>
            <person name="de Grey A.D.N.J."/>
            <person name="Drysdale R.A."/>
            <person name="Harris N.L."/>
            <person name="Richter J."/>
            <person name="Russo S."/>
            <person name="Schroeder A.J."/>
            <person name="Shu S.Q."/>
            <person name="Stapleton M."/>
            <person name="Yamada C."/>
            <person name="Ashburner M."/>
            <person name="Gelbart W.M."/>
            <person name="Rubin G.M."/>
            <person name="Lewis S.E."/>
        </authorList>
    </citation>
    <scope>GENOME REANNOTATION</scope>
    <scope>ALTERNATIVE SPLICING</scope>
    <source>
        <strain>Berkeley</strain>
    </source>
</reference>
<reference evidence="13 17" key="5">
    <citation type="submission" date="2003-08" db="EMBL/GenBank/DDBJ databases">
        <authorList>
            <person name="Stapleton M."/>
            <person name="Brokstein P."/>
            <person name="Hong L."/>
            <person name="Agbayani A."/>
            <person name="Carlson J."/>
            <person name="Champe M."/>
            <person name="Chavez C."/>
            <person name="Dorsett V."/>
            <person name="Dresnek D."/>
            <person name="Farfan D."/>
            <person name="Frise E."/>
            <person name="George R."/>
            <person name="Gonzalez M."/>
            <person name="Guarin H."/>
            <person name="Kronmiller B."/>
            <person name="Li P."/>
            <person name="Liao G."/>
            <person name="Miranda A."/>
            <person name="Mungall C.J."/>
            <person name="Nunoo J."/>
            <person name="Pacleb J."/>
            <person name="Paragas V."/>
            <person name="Park S."/>
            <person name="Patel S."/>
            <person name="Phouanenavong S."/>
            <person name="Wan K."/>
            <person name="Yu C."/>
            <person name="Lewis S.E."/>
            <person name="Rubin G.M."/>
            <person name="Celniker S."/>
        </authorList>
    </citation>
    <scope>NUCLEOTIDE SEQUENCE [LARGE SCALE MRNA] (ISOFORM A)</scope>
    <source>
        <strain evidence="16">Berkeley</strain>
        <tissue>Embryo</tissue>
    </source>
</reference>
<reference evidence="13 17" key="6">
    <citation type="submission" date="2008-09" db="EMBL/GenBank/DDBJ databases">
        <authorList>
            <person name="Carlson J."/>
            <person name="Booth B."/>
            <person name="Frise E."/>
            <person name="Park S."/>
            <person name="Wan K."/>
            <person name="Yu C."/>
            <person name="Celniker S."/>
        </authorList>
    </citation>
    <scope>NUCLEOTIDE SEQUENCE [LARGE SCALE MRNA] (ISOFORM A)</scope>
    <source>
        <strain evidence="16">Berkeley</strain>
    </source>
</reference>
<reference evidence="13" key="7">
    <citation type="journal article" date="2005" name="Proc. Natl. Acad. Sci. U.S.A.">
        <title>Drosophila neuropeptide F and its receptor, NPFR1, define a signaling pathway that acutely modulates alcohol sensitivity.</title>
        <authorList>
            <person name="Wen T."/>
            <person name="Parrish C.A."/>
            <person name="Xu D."/>
            <person name="Wu Q."/>
            <person name="Shen P."/>
        </authorList>
    </citation>
    <scope>FUNCTION</scope>
    <scope>TISSUE SPECIFICITY</scope>
    <scope>DISRUPTION PHENOTYPE</scope>
</reference>
<reference evidence="13" key="8">
    <citation type="journal article" date="2009" name="Cell">
        <title>A neural circuit mechanism integrating motivational state with memory expression in Drosophila.</title>
        <authorList>
            <person name="Krashes M.J."/>
            <person name="DasGupta S."/>
            <person name="Vreede A."/>
            <person name="White B."/>
            <person name="Armstrong J.D."/>
            <person name="Waddell S."/>
        </authorList>
    </citation>
    <scope>FUNCTION</scope>
    <scope>TISSUE SPECIFICITY</scope>
</reference>
<reference evidence="13" key="9">
    <citation type="journal article" date="2010" name="J. Neurosci.">
        <title>A G-protein-coupled neuropeptide Y-like receptor suppresses behavioral and sensory response to multiple stressful stimuli in Drosophila.</title>
        <authorList>
            <person name="Xu J."/>
            <person name="Li M."/>
            <person name="Shen P."/>
        </authorList>
    </citation>
    <scope>FUNCTION</scope>
    <scope>TISSUE SPECIFICITY</scope>
    <scope>DISRUPTION PHENOTYPE</scope>
</reference>
<reference evidence="13" key="10">
    <citation type="journal article" date="2012" name="Science">
        <title>Sexual deprivation increases ethanol intake in Drosophila.</title>
        <authorList>
            <person name="Shohat-Ophir G."/>
            <person name="Kaun K.R."/>
            <person name="Azanchi R."/>
            <person name="Heberlein U."/>
        </authorList>
    </citation>
    <scope>FUNCTION</scope>
    <scope>TISSUE SPECIFICITY</scope>
    <scope>DISRUPTION PHENOTYPE</scope>
</reference>
<sequence>MIISMNQTEPAQLADGEHLSGYASSSNSVRYLDDRHPLDYLDLGTVHALNTTAINTSDLNETGSRPLDPVLIDRFLSNRAVDSPWYHMLISMYGVLIVFGALGNTLVVIAVIRKPIMRTARNLFILNLAISDLLLCLVTMPLTLMEILSKYWPYGSCSILCKTIAMLQALCIFVSTISITAIAFDRYQVIVYPTRDSLQFVGAVTILAGIWALALLLASPLFVYKELINTDTPALLQQIGLQDTIPYCIEDWPSRNGRFYYSIFSLCVQYLVPILIVSVAYFGIYNKLKSRITVVAVQASSAQRKVERGRRMKRTNCLLISIAIIFGVSWLPLNFFNLYADMERSPVTQSMLVRYAICHMIGMSSACSNPLLYGWLNDNFRKEFQELLCRCSDTNVALNGHTTGCNVQAAARRRRKLGAELSKGELKLLGPGGAQSGTAGGEGGLAATDFMTGHHEGGLRSAITESVALTDHNPVPSEVTKLMPR</sequence>
<comment type="function">
    <text evidence="4 5 6 7 8">Receptor for NPF. Integral part of the sensory system that mediates food signaling, providing the neural basis for the regulation of food response; coordinates larval foraging and social behavior changes during development. Required in dopaminergic (DA) neurons that innervate the mushroom body for satiety to suppress appetitive memory performance; a key factor in the internal state of hunger in the brain. NPF neurons coordinately modulate diverse sensory and motor neurons important for feeding, flight, and locomotion. NPF/NPFR pathway exerts its suppressive effect on larval aversion to diverse stressful stimuli (chemical stress and noxious heat) through attenuation of TRP channel-induced neuronal excitation. NPF neural signaling system plays a physiological role in acute modulation of alcohol sensitivity in adults, rather than a general response to intoxication by sedative agents. Activation and inhibition of the NPF system reduces and enhances ethanol preference, respectively. Sexual experience, the NPF system activity and ethanol consumption are all linked; sexual deprivation is a major contributor to enhanced ethanol preference.</text>
</comment>
<comment type="subcellular location">
    <subcellularLocation>
        <location evidence="1">Membrane</location>
        <topology evidence="1">Multi-pass membrane protein</topology>
    </subcellularLocation>
</comment>
<comment type="alternative products">
    <event type="alternative splicing"/>
    <isoform>
        <id>Q9VNM1-1</id>
        <name evidence="3">A</name>
        <name evidence="9">variant 1</name>
        <sequence type="displayed"/>
    </isoform>
    <isoform>
        <id>Q9VNM1-2</id>
        <name evidence="9">2</name>
        <sequence type="described" ref="VSP_043735 VSP_043736"/>
    </isoform>
    <isoform>
        <id>Q9VNM1-3</id>
        <name evidence="3">B</name>
        <name evidence="9">variant 3</name>
        <sequence type="described" ref="VSP_043736 VSP_043737"/>
    </isoform>
    <isoform>
        <id>Q9VNM1-4</id>
        <name evidence="3">D</name>
        <name evidence="9">variant 4</name>
        <sequence type="described" ref="VSP_043737"/>
    </isoform>
    <isoform>
        <id>Q9VNM1-5</id>
        <name evidence="3">C</name>
        <name evidence="9">variant 5</name>
        <sequence type="described" ref="VSP_043736"/>
    </isoform>
    <isoform>
        <id>Q9VNM1-6</id>
        <name evidence="3 4">6</name>
        <sequence type="described" ref="VSP_043735"/>
    </isoform>
</comment>
<comment type="tissue specificity">
    <text evidence="4 5 6 7 8">Expressed in midgut, brain lobes and ventral nerve cord of larvae. In adults, expressed in a pair of dorsolateral neurons in the protocerebrum, and the central complex and a small number of neurons in the subesophageal ganglion (at protein level). Expressed in a subset of sugar-responsive PAIN neurons in the thoracic body but is absent from other peripheral PAIN neurons.</text>
</comment>
<comment type="disruption phenotype">
    <text evidence="4 5 7 8">Increased NPF or NPFR activity dominantly suppresses PAIN-mediated food aversion in postfeeding larvae. Deficiency in NPF/NPFR signaling causes decreased alcohol sensitivity and overexpression causes a hypersensitive response to alcohol sedation. Controlled functional disruption of NPF or NPFR neurons rapidly triggers acute resistance to ethanol sedation.</text>
</comment>
<comment type="similarity">
    <text evidence="2">Belongs to the G-protein coupled receptor 1 family.</text>
</comment>
<proteinExistence type="evidence at protein level"/>
<dbReference type="EMBL" id="AF364400">
    <property type="protein sequence ID" value="AAK50050.1"/>
    <property type="molecule type" value="mRNA"/>
</dbReference>
<dbReference type="EMBL" id="DQ666847">
    <property type="protein sequence ID" value="ABH01175.1"/>
    <property type="molecule type" value="mRNA"/>
</dbReference>
<dbReference type="EMBL" id="DQ666848">
    <property type="protein sequence ID" value="ABH01176.1"/>
    <property type="molecule type" value="mRNA"/>
</dbReference>
<dbReference type="EMBL" id="DQ666849">
    <property type="protein sequence ID" value="ABH01177.1"/>
    <property type="molecule type" value="mRNA"/>
</dbReference>
<dbReference type="EMBL" id="DQ666850">
    <property type="protein sequence ID" value="ABH01178.1"/>
    <property type="molecule type" value="mRNA"/>
</dbReference>
<dbReference type="EMBL" id="DQ666851">
    <property type="protein sequence ID" value="ABH01179.1"/>
    <property type="molecule type" value="mRNA"/>
</dbReference>
<dbReference type="EMBL" id="AE014297">
    <property type="protein sequence ID" value="AAF51909.3"/>
    <property type="molecule type" value="Genomic_DNA"/>
</dbReference>
<dbReference type="EMBL" id="AY071152">
    <property type="protein sequence ID" value="AAL48774.1"/>
    <property type="molecule type" value="mRNA"/>
</dbReference>
<dbReference type="EMBL" id="BT044552">
    <property type="protein sequence ID" value="ACI12877.1"/>
    <property type="molecule type" value="mRNA"/>
</dbReference>
<dbReference type="RefSeq" id="NP_001246945.1">
    <molecule id="Q9VNM1-3"/>
    <property type="nucleotide sequence ID" value="NM_001260016.2"/>
</dbReference>
<dbReference type="RefSeq" id="NP_001246946.1">
    <molecule id="Q9VNM1-5"/>
    <property type="nucleotide sequence ID" value="NM_001260017.2"/>
</dbReference>
<dbReference type="RefSeq" id="NP_001246947.1">
    <molecule id="Q9VNM1-4"/>
    <property type="nucleotide sequence ID" value="NM_001260018.2"/>
</dbReference>
<dbReference type="RefSeq" id="NP_524245.3">
    <molecule id="Q9VNM1-1"/>
    <property type="nucleotide sequence ID" value="NM_079521.4"/>
</dbReference>
<dbReference type="SMR" id="Q9VNM1"/>
<dbReference type="FunCoup" id="Q9VNM1">
    <property type="interactions" value="118"/>
</dbReference>
<dbReference type="IntAct" id="Q9VNM1">
    <property type="interactions" value="1"/>
</dbReference>
<dbReference type="STRING" id="7227.FBpp0300637"/>
<dbReference type="ChEMBL" id="CHEMBL3879841"/>
<dbReference type="PaxDb" id="7227-FBpp0300637"/>
<dbReference type="DNASU" id="40754"/>
<dbReference type="EnsemblMetazoa" id="FBtr0078590">
    <molecule id="Q9VNM1-1"/>
    <property type="protein sequence ID" value="FBpp0078239"/>
    <property type="gene ID" value="FBgn0037408"/>
</dbReference>
<dbReference type="EnsemblMetazoa" id="FBtr0308316">
    <molecule id="Q9VNM1-3"/>
    <property type="protein sequence ID" value="FBpp0300635"/>
    <property type="gene ID" value="FBgn0037408"/>
</dbReference>
<dbReference type="EnsemblMetazoa" id="FBtr0308317">
    <molecule id="Q9VNM1-5"/>
    <property type="protein sequence ID" value="FBpp0300636"/>
    <property type="gene ID" value="FBgn0037408"/>
</dbReference>
<dbReference type="EnsemblMetazoa" id="FBtr0308318">
    <molecule id="Q9VNM1-4"/>
    <property type="protein sequence ID" value="FBpp0300637"/>
    <property type="gene ID" value="FBgn0037408"/>
</dbReference>
<dbReference type="GeneID" id="40754"/>
<dbReference type="KEGG" id="dme:Dmel_CG1147"/>
<dbReference type="UCSC" id="CG1147-RA">
    <molecule id="Q9VNM1-1"/>
    <property type="organism name" value="d. melanogaster"/>
</dbReference>
<dbReference type="AGR" id="FB:FBgn0037408"/>
<dbReference type="CTD" id="40754"/>
<dbReference type="FlyBase" id="FBgn0037408">
    <property type="gene designation" value="NPFR"/>
</dbReference>
<dbReference type="VEuPathDB" id="VectorBase:FBgn0037408"/>
<dbReference type="eggNOG" id="KOG3656">
    <property type="taxonomic scope" value="Eukaryota"/>
</dbReference>
<dbReference type="GeneTree" id="ENSGT00940000168939"/>
<dbReference type="InParanoid" id="Q9VNM1"/>
<dbReference type="OMA" id="RMKRTNR"/>
<dbReference type="OrthoDB" id="9046662at2759"/>
<dbReference type="PhylomeDB" id="Q9VNM1"/>
<dbReference type="BioGRID-ORCS" id="40754">
    <property type="hits" value="0 hits in 3 CRISPR screens"/>
</dbReference>
<dbReference type="GenomeRNAi" id="40754"/>
<dbReference type="PRO" id="PR:Q9VNM1"/>
<dbReference type="Proteomes" id="UP000000803">
    <property type="component" value="Chromosome 3R"/>
</dbReference>
<dbReference type="Bgee" id="FBgn0037408">
    <property type="expression patterns" value="Expressed in adult middle midgut class I enteroendocrine cell in adult midgut (Drosophila) and 51 other cell types or tissues"/>
</dbReference>
<dbReference type="ExpressionAtlas" id="Q9VNM1">
    <property type="expression patterns" value="baseline and differential"/>
</dbReference>
<dbReference type="GO" id="GO:0016020">
    <property type="term" value="C:membrane"/>
    <property type="evidence" value="ECO:0000250"/>
    <property type="project" value="FlyBase"/>
</dbReference>
<dbReference type="GO" id="GO:0005886">
    <property type="term" value="C:plasma membrane"/>
    <property type="evidence" value="ECO:0000314"/>
    <property type="project" value="FlyBase"/>
</dbReference>
<dbReference type="GO" id="GO:0042923">
    <property type="term" value="F:neuropeptide binding"/>
    <property type="evidence" value="ECO:0000353"/>
    <property type="project" value="FlyBase"/>
</dbReference>
<dbReference type="GO" id="GO:0042263">
    <property type="term" value="F:neuropeptide F receptor activity"/>
    <property type="evidence" value="ECO:0000353"/>
    <property type="project" value="FlyBase"/>
</dbReference>
<dbReference type="GO" id="GO:0004983">
    <property type="term" value="F:neuropeptide Y receptor activity"/>
    <property type="evidence" value="ECO:0007669"/>
    <property type="project" value="InterPro"/>
</dbReference>
<dbReference type="GO" id="GO:0007186">
    <property type="term" value="P:G protein-coupled receptor signaling pathway"/>
    <property type="evidence" value="ECO:0000255"/>
    <property type="project" value="FlyBase"/>
</dbReference>
<dbReference type="GO" id="GO:0030536">
    <property type="term" value="P:larval feeding behavior"/>
    <property type="evidence" value="ECO:0000315"/>
    <property type="project" value="FlyBase"/>
</dbReference>
<dbReference type="GO" id="GO:0044703">
    <property type="term" value="P:multi-organism reproductive process"/>
    <property type="evidence" value="ECO:0000315"/>
    <property type="project" value="FlyBase"/>
</dbReference>
<dbReference type="GO" id="GO:0007218">
    <property type="term" value="P:neuropeptide signaling pathway"/>
    <property type="evidence" value="ECO:0000314"/>
    <property type="project" value="FlyBase"/>
</dbReference>
<dbReference type="GO" id="GO:0042048">
    <property type="term" value="P:olfactory behavior"/>
    <property type="evidence" value="ECO:0000315"/>
    <property type="project" value="FlyBase"/>
</dbReference>
<dbReference type="GO" id="GO:1990834">
    <property type="term" value="P:response to odorant"/>
    <property type="evidence" value="ECO:0000315"/>
    <property type="project" value="FlyBase"/>
</dbReference>
<dbReference type="GO" id="GO:0007217">
    <property type="term" value="P:tachykinin receptor signaling pathway"/>
    <property type="evidence" value="ECO:0000250"/>
    <property type="project" value="FlyBase"/>
</dbReference>
<dbReference type="CDD" id="cd15203">
    <property type="entry name" value="7tmA_NPYR-like"/>
    <property type="match status" value="1"/>
</dbReference>
<dbReference type="FunFam" id="1.20.1070.10:FF:000373">
    <property type="entry name" value="Neuropeptide F receptor"/>
    <property type="match status" value="1"/>
</dbReference>
<dbReference type="Gene3D" id="1.20.1070.10">
    <property type="entry name" value="Rhodopsin 7-helix transmembrane proteins"/>
    <property type="match status" value="1"/>
</dbReference>
<dbReference type="InterPro" id="IPR000276">
    <property type="entry name" value="GPCR_Rhodpsn"/>
</dbReference>
<dbReference type="InterPro" id="IPR017452">
    <property type="entry name" value="GPCR_Rhodpsn_7TM"/>
</dbReference>
<dbReference type="InterPro" id="IPR000611">
    <property type="entry name" value="NPY_rcpt"/>
</dbReference>
<dbReference type="PANTHER" id="PTHR24235:SF30">
    <property type="entry name" value="NEUROPEPTIDE F RECEPTOR"/>
    <property type="match status" value="1"/>
</dbReference>
<dbReference type="PANTHER" id="PTHR24235">
    <property type="entry name" value="NEUROPEPTIDE Y RECEPTOR"/>
    <property type="match status" value="1"/>
</dbReference>
<dbReference type="Pfam" id="PF00001">
    <property type="entry name" value="7tm_1"/>
    <property type="match status" value="1"/>
</dbReference>
<dbReference type="PRINTS" id="PR00237">
    <property type="entry name" value="GPCRRHODOPSN"/>
</dbReference>
<dbReference type="PRINTS" id="PR01012">
    <property type="entry name" value="NRPEPTIDEYR"/>
</dbReference>
<dbReference type="SMART" id="SM01381">
    <property type="entry name" value="7TM_GPCR_Srsx"/>
    <property type="match status" value="1"/>
</dbReference>
<dbReference type="SUPFAM" id="SSF81321">
    <property type="entry name" value="Family A G protein-coupled receptor-like"/>
    <property type="match status" value="1"/>
</dbReference>
<dbReference type="PROSITE" id="PS00237">
    <property type="entry name" value="G_PROTEIN_RECEP_F1_1"/>
    <property type="match status" value="1"/>
</dbReference>
<dbReference type="PROSITE" id="PS50262">
    <property type="entry name" value="G_PROTEIN_RECEP_F1_2"/>
    <property type="match status" value="1"/>
</dbReference>
<evidence type="ECO:0000255" key="1"/>
<evidence type="ECO:0000255" key="2">
    <source>
        <dbReference type="PROSITE-ProRule" id="PRU00521"/>
    </source>
</evidence>
<evidence type="ECO:0000269" key="3">
    <source>
    </source>
</evidence>
<evidence type="ECO:0000269" key="4">
    <source>
    </source>
</evidence>
<evidence type="ECO:0000269" key="5">
    <source>
    </source>
</evidence>
<evidence type="ECO:0000269" key="6">
    <source>
    </source>
</evidence>
<evidence type="ECO:0000269" key="7">
    <source>
    </source>
</evidence>
<evidence type="ECO:0000269" key="8">
    <source>
    </source>
</evidence>
<evidence type="ECO:0000269" key="9">
    <source ref="2"/>
</evidence>
<evidence type="ECO:0000303" key="10">
    <source>
    </source>
</evidence>
<evidence type="ECO:0000303" key="11">
    <source>
    </source>
</evidence>
<evidence type="ECO:0000303" key="12">
    <source ref="2"/>
</evidence>
<evidence type="ECO:0000305" key="13"/>
<evidence type="ECO:0000312" key="14">
    <source>
        <dbReference type="EMBL" id="AAF51909.3"/>
    </source>
</evidence>
<evidence type="ECO:0000312" key="15">
    <source>
        <dbReference type="EMBL" id="AAK50050.1"/>
    </source>
</evidence>
<evidence type="ECO:0000312" key="16">
    <source>
        <dbReference type="EMBL" id="AAL48774.1"/>
    </source>
</evidence>
<evidence type="ECO:0000312" key="17">
    <source>
        <dbReference type="EMBL" id="ABH01175.1"/>
    </source>
</evidence>
<evidence type="ECO:0000312" key="18">
    <source>
        <dbReference type="FlyBase" id="FBgn0037408"/>
    </source>
</evidence>
<keyword id="KW-0025">Alternative splicing</keyword>
<keyword id="KW-0085">Behavior</keyword>
<keyword id="KW-1015">Disulfide bond</keyword>
<keyword id="KW-0297">G-protein coupled receptor</keyword>
<keyword id="KW-0472">Membrane</keyword>
<keyword id="KW-0527">Neuropeptide</keyword>
<keyword id="KW-0675">Receptor</keyword>
<keyword id="KW-1185">Reference proteome</keyword>
<keyword id="KW-0346">Stress response</keyword>
<keyword id="KW-0807">Transducer</keyword>
<keyword id="KW-0812">Transmembrane</keyword>
<keyword id="KW-1133">Transmembrane helix</keyword>
<gene>
    <name evidence="18" type="primary">NPFR</name>
    <name type="synonym">NPFR1</name>
    <name type="ORF">CG1147</name>
</gene>
<accession>Q9VNM1</accession>
<accession>D2CFP0</accession>
<accession>D2CFP1</accession>
<accession>D2CFP2</accession>
<accession>D2CFP3</accession>
<accession>D2CFP4</accession>
<accession>Q7KFF8</accession>
<accession>Q8SZ35</accession>
<accession>Q967T7</accession>
<protein>
    <recommendedName>
        <fullName evidence="11 14">Neuropeptide F receptor</fullName>
        <shortName evidence="11">DmNPFR1</shortName>
    </recommendedName>
</protein>
<feature type="chain" id="PRO_0000417447" description="Neuropeptide F receptor">
    <location>
        <begin position="1"/>
        <end position="485"/>
    </location>
</feature>
<feature type="topological domain" description="Extracellular" evidence="1">
    <location>
        <begin position="1"/>
        <end position="91"/>
    </location>
</feature>
<feature type="transmembrane region" description="Helical; Name=1" evidence="1">
    <location>
        <begin position="92"/>
        <end position="112"/>
    </location>
</feature>
<feature type="topological domain" description="Cytoplasmic" evidence="1">
    <location>
        <begin position="113"/>
        <end position="122"/>
    </location>
</feature>
<feature type="transmembrane region" description="Helical; Name=2" evidence="1">
    <location>
        <begin position="123"/>
        <end position="143"/>
    </location>
</feature>
<feature type="topological domain" description="Extracellular" evidence="1">
    <location>
        <begin position="144"/>
        <end position="163"/>
    </location>
</feature>
<feature type="transmembrane region" description="Helical; Name=3" evidence="1">
    <location>
        <begin position="164"/>
        <end position="184"/>
    </location>
</feature>
<feature type="topological domain" description="Cytoplasmic" evidence="1">
    <location>
        <begin position="185"/>
        <end position="202"/>
    </location>
</feature>
<feature type="transmembrane region" description="Helical; Name=4" evidence="1">
    <location>
        <begin position="203"/>
        <end position="223"/>
    </location>
</feature>
<feature type="topological domain" description="Extracellular" evidence="1">
    <location>
        <begin position="224"/>
        <end position="262"/>
    </location>
</feature>
<feature type="transmembrane region" description="Helical; Name=5" evidence="1">
    <location>
        <begin position="263"/>
        <end position="283"/>
    </location>
</feature>
<feature type="topological domain" description="Cytoplasmic" evidence="1">
    <location>
        <begin position="284"/>
        <end position="317"/>
    </location>
</feature>
<feature type="transmembrane region" description="Helical; Name=6" evidence="1">
    <location>
        <begin position="318"/>
        <end position="338"/>
    </location>
</feature>
<feature type="topological domain" description="Extracellular" evidence="1">
    <location>
        <begin position="339"/>
        <end position="355"/>
    </location>
</feature>
<feature type="transmembrane region" description="Helical; Name=7" evidence="1">
    <location>
        <begin position="356"/>
        <end position="376"/>
    </location>
</feature>
<feature type="topological domain" description="Cytoplasmic" evidence="1">
    <location>
        <begin position="377"/>
        <end position="485"/>
    </location>
</feature>
<feature type="disulfide bond" evidence="2">
    <location>
        <begin position="161"/>
        <end position="248"/>
    </location>
</feature>
<feature type="splice variant" id="VSP_043735" description="In isoform 2 and isoform 6." evidence="11 12">
    <location>
        <begin position="1"/>
        <end position="4"/>
    </location>
</feature>
<feature type="splice variant" id="VSP_043736" description="In isoform 2, isoform B and isoform C." evidence="10 12">
    <location>
        <begin position="382"/>
        <end position="404"/>
    </location>
</feature>
<feature type="splice variant" id="VSP_043737" description="In isoform B and isoform D." evidence="10 12">
    <original>R</original>
    <variation>RLEQY</variation>
    <location>
        <position position="485"/>
    </location>
</feature>
<feature type="sequence conflict" description="In Ref. 5; AAL48774." evidence="13" ref="5">
    <original>R</original>
    <variation>M</variation>
    <location>
        <position position="65"/>
    </location>
</feature>
<feature type="sequence conflict" description="In Ref. 2; ABH01175." evidence="13" ref="2">
    <original>K</original>
    <variation>E</variation>
    <location>
        <position position="162"/>
    </location>
</feature>
<feature type="sequence conflict" description="In Ref. 2; ABH01178." evidence="13" ref="2">
    <original>M</original>
    <variation>V</variation>
    <location>
        <position position="166"/>
    </location>
</feature>
<feature type="sequence conflict" description="In Ref. 2; ABH01178." evidence="13" ref="2">
    <original>R</original>
    <variation>W</variation>
    <location>
        <position position="304"/>
    </location>
</feature>
<feature type="sequence conflict" description="In Ref. 2; ABH01177." evidence="13" ref="2">
    <original>A</original>
    <variation>T</variation>
    <location>
        <position position="340"/>
    </location>
</feature>
<feature type="sequence conflict" description="In Ref. 2; ABH01175." evidence="13" ref="2">
    <original>V</original>
    <variation>A</variation>
    <location>
        <position position="347"/>
    </location>
</feature>
<feature type="sequence conflict" description="In Ref. 2; ABH01177." evidence="13" ref="2">
    <original>R</original>
    <variation>K</variation>
    <location>
        <position position="413"/>
    </location>
</feature>
<name>NPFR_DROME</name>
<organism>
    <name type="scientific">Drosophila melanogaster</name>
    <name type="common">Fruit fly</name>
    <dbReference type="NCBI Taxonomy" id="7227"/>
    <lineage>
        <taxon>Eukaryota</taxon>
        <taxon>Metazoa</taxon>
        <taxon>Ecdysozoa</taxon>
        <taxon>Arthropoda</taxon>
        <taxon>Hexapoda</taxon>
        <taxon>Insecta</taxon>
        <taxon>Pterygota</taxon>
        <taxon>Neoptera</taxon>
        <taxon>Endopterygota</taxon>
        <taxon>Diptera</taxon>
        <taxon>Brachycera</taxon>
        <taxon>Muscomorpha</taxon>
        <taxon>Ephydroidea</taxon>
        <taxon>Drosophilidae</taxon>
        <taxon>Drosophila</taxon>
        <taxon>Sophophora</taxon>
    </lineage>
</organism>